<name>MGTE_ENTFA</name>
<evidence type="ECO:0000250" key="1">
    <source>
        <dbReference type="UniProtKB" id="Q5SMG8"/>
    </source>
</evidence>
<evidence type="ECO:0000255" key="2"/>
<evidence type="ECO:0000255" key="3">
    <source>
        <dbReference type="PROSITE-ProRule" id="PRU00703"/>
    </source>
</evidence>
<evidence type="ECO:0000269" key="4">
    <source>
    </source>
</evidence>
<evidence type="ECO:0000303" key="5">
    <source>
    </source>
</evidence>
<evidence type="ECO:0000305" key="6"/>
<evidence type="ECO:0000305" key="7">
    <source>
    </source>
</evidence>
<evidence type="ECO:0007744" key="8">
    <source>
        <dbReference type="PDB" id="2OUX"/>
    </source>
</evidence>
<evidence type="ECO:0007829" key="9">
    <source>
        <dbReference type="PDB" id="2OUX"/>
    </source>
</evidence>
<dbReference type="EMBL" id="AE016830">
    <property type="protein sequence ID" value="AAO82375.1"/>
    <property type="molecule type" value="Genomic_DNA"/>
</dbReference>
<dbReference type="RefSeq" id="NP_816305.1">
    <property type="nucleotide sequence ID" value="NC_004668.1"/>
</dbReference>
<dbReference type="RefSeq" id="WP_002362548.1">
    <property type="nucleotide sequence ID" value="NZ_KE136528.1"/>
</dbReference>
<dbReference type="PDB" id="2OUX">
    <property type="method" value="X-ray"/>
    <property type="resolution" value="2.16 A"/>
    <property type="chains" value="A/B=2-285"/>
</dbReference>
<dbReference type="PDBsum" id="2OUX"/>
<dbReference type="SMR" id="Q830V1"/>
<dbReference type="STRING" id="226185.EF_2668"/>
<dbReference type="DNASU" id="1201525"/>
<dbReference type="EnsemblBacteria" id="AAO82375">
    <property type="protein sequence ID" value="AAO82375"/>
    <property type="gene ID" value="EF_2668"/>
</dbReference>
<dbReference type="GeneID" id="60894662"/>
<dbReference type="KEGG" id="efa:EF2668"/>
<dbReference type="PATRIC" id="fig|226185.45.peg.893"/>
<dbReference type="eggNOG" id="COG2239">
    <property type="taxonomic scope" value="Bacteria"/>
</dbReference>
<dbReference type="HOGENOM" id="CLU_037408_2_2_9"/>
<dbReference type="EvolutionaryTrace" id="Q830V1"/>
<dbReference type="Proteomes" id="UP000001415">
    <property type="component" value="Chromosome"/>
</dbReference>
<dbReference type="GO" id="GO:0005886">
    <property type="term" value="C:plasma membrane"/>
    <property type="evidence" value="ECO:0007669"/>
    <property type="project" value="UniProtKB-SubCell"/>
</dbReference>
<dbReference type="GO" id="GO:0015095">
    <property type="term" value="F:magnesium ion transmembrane transporter activity"/>
    <property type="evidence" value="ECO:0007669"/>
    <property type="project" value="InterPro"/>
</dbReference>
<dbReference type="GO" id="GO:0046872">
    <property type="term" value="F:metal ion binding"/>
    <property type="evidence" value="ECO:0007669"/>
    <property type="project" value="UniProtKB-KW"/>
</dbReference>
<dbReference type="CDD" id="cd04606">
    <property type="entry name" value="CBS_pair_Mg_transporter"/>
    <property type="match status" value="1"/>
</dbReference>
<dbReference type="Gene3D" id="3.10.580.10">
    <property type="entry name" value="CBS-domain"/>
    <property type="match status" value="1"/>
</dbReference>
<dbReference type="Gene3D" id="1.25.60.10">
    <property type="entry name" value="MgtE N-terminal domain-like"/>
    <property type="match status" value="1"/>
</dbReference>
<dbReference type="Gene3D" id="1.10.357.20">
    <property type="entry name" value="SLC41 divalent cation transporters, integral membrane domain"/>
    <property type="match status" value="1"/>
</dbReference>
<dbReference type="InterPro" id="IPR000644">
    <property type="entry name" value="CBS_dom"/>
</dbReference>
<dbReference type="InterPro" id="IPR046342">
    <property type="entry name" value="CBS_dom_sf"/>
</dbReference>
<dbReference type="InterPro" id="IPR006668">
    <property type="entry name" value="Mg_transptr_MgtE_intracell_dom"/>
</dbReference>
<dbReference type="InterPro" id="IPR038076">
    <property type="entry name" value="MgtE_N_sf"/>
</dbReference>
<dbReference type="InterPro" id="IPR006669">
    <property type="entry name" value="MgtE_transporter"/>
</dbReference>
<dbReference type="InterPro" id="IPR006667">
    <property type="entry name" value="SLC41_membr_dom"/>
</dbReference>
<dbReference type="InterPro" id="IPR036739">
    <property type="entry name" value="SLC41_membr_dom_sf"/>
</dbReference>
<dbReference type="NCBIfam" id="TIGR00400">
    <property type="entry name" value="mgtE"/>
    <property type="match status" value="1"/>
</dbReference>
<dbReference type="PANTHER" id="PTHR43773">
    <property type="entry name" value="MAGNESIUM TRANSPORTER MGTE"/>
    <property type="match status" value="1"/>
</dbReference>
<dbReference type="PANTHER" id="PTHR43773:SF1">
    <property type="entry name" value="MAGNESIUM TRANSPORTER MGTE"/>
    <property type="match status" value="1"/>
</dbReference>
<dbReference type="Pfam" id="PF00571">
    <property type="entry name" value="CBS"/>
    <property type="match status" value="2"/>
</dbReference>
<dbReference type="Pfam" id="PF01769">
    <property type="entry name" value="MgtE"/>
    <property type="match status" value="1"/>
</dbReference>
<dbReference type="Pfam" id="PF03448">
    <property type="entry name" value="MgtE_N"/>
    <property type="match status" value="1"/>
</dbReference>
<dbReference type="SMART" id="SM00116">
    <property type="entry name" value="CBS"/>
    <property type="match status" value="2"/>
</dbReference>
<dbReference type="SMART" id="SM00924">
    <property type="entry name" value="MgtE_N"/>
    <property type="match status" value="1"/>
</dbReference>
<dbReference type="SUPFAM" id="SSF54631">
    <property type="entry name" value="CBS-domain pair"/>
    <property type="match status" value="1"/>
</dbReference>
<dbReference type="SUPFAM" id="SSF161093">
    <property type="entry name" value="MgtE membrane domain-like"/>
    <property type="match status" value="1"/>
</dbReference>
<dbReference type="SUPFAM" id="SSF158791">
    <property type="entry name" value="MgtE N-terminal domain-like"/>
    <property type="match status" value="1"/>
</dbReference>
<dbReference type="PROSITE" id="PS51371">
    <property type="entry name" value="CBS"/>
    <property type="match status" value="2"/>
</dbReference>
<reference key="1">
    <citation type="journal article" date="2003" name="Science">
        <title>Role of mobile DNA in the evolution of vancomycin-resistant Enterococcus faecalis.</title>
        <authorList>
            <person name="Paulsen I.T."/>
            <person name="Banerjei L."/>
            <person name="Myers G.S.A."/>
            <person name="Nelson K.E."/>
            <person name="Seshadri R."/>
            <person name="Read T.D."/>
            <person name="Fouts D.E."/>
            <person name="Eisen J.A."/>
            <person name="Gill S.R."/>
            <person name="Heidelberg J.F."/>
            <person name="Tettelin H."/>
            <person name="Dodson R.J."/>
            <person name="Umayam L.A."/>
            <person name="Brinkac L.M."/>
            <person name="Beanan M.J."/>
            <person name="Daugherty S.C."/>
            <person name="DeBoy R.T."/>
            <person name="Durkin S.A."/>
            <person name="Kolonay J.F."/>
            <person name="Madupu R."/>
            <person name="Nelson W.C."/>
            <person name="Vamathevan J.J."/>
            <person name="Tran B."/>
            <person name="Upton J."/>
            <person name="Hansen T."/>
            <person name="Shetty J."/>
            <person name="Khouri H.M."/>
            <person name="Utterback T.R."/>
            <person name="Radune D."/>
            <person name="Ketchum K.A."/>
            <person name="Dougherty B.A."/>
            <person name="Fraser C.M."/>
        </authorList>
    </citation>
    <scope>NUCLEOTIDE SEQUENCE [LARGE SCALE GENOMIC DNA]</scope>
    <source>
        <strain>ATCC 700802 / V583</strain>
    </source>
</reference>
<reference key="2">
    <citation type="journal article" date="2007" name="Acta Crystallogr. F">
        <title>Crystallization and preliminary X-ray diffraction analysis of the full-length Mg2+ transporter MgtE.</title>
        <authorList>
            <person name="Hattori M."/>
            <person name="Tanaka Y."/>
            <person name="Fukai S."/>
            <person name="Ishitani R."/>
            <person name="Nureki O."/>
        </authorList>
    </citation>
    <scope>PRELIMINARY X-RAY CRYSTALLOGRAPHY (2.16 ANGSTROMS) OF 2-285</scope>
    <scope>CRYSTALLIZATION</scope>
    <scope>SUBUNIT</scope>
</reference>
<reference evidence="8" key="3">
    <citation type="journal article" date="2010" name="Proteins">
        <title>Structural studies on cytosolic domain of magnesium transporter MgtE from Enterococcus faecalis.</title>
        <authorList>
            <person name="Ragumani S."/>
            <person name="Sauder J.M."/>
            <person name="Burley S.K."/>
            <person name="Swaminathan S."/>
        </authorList>
    </citation>
    <scope>X-RAY CRYSTALLOGRAPHY (2.16 ANGSTROMS) OF 2-285 IN COMPLEX WITH MG(2+)</scope>
    <scope>SUBUNIT</scope>
    <source>
        <strain>ATCC 700802 / V583</strain>
    </source>
</reference>
<gene>
    <name evidence="5" type="primary">mgtE</name>
    <name type="ordered locus">EF_2668</name>
</gene>
<proteinExistence type="evidence at protein level"/>
<keyword id="KW-0002">3D-structure</keyword>
<keyword id="KW-0129">CBS domain</keyword>
<keyword id="KW-1003">Cell membrane</keyword>
<keyword id="KW-0460">Magnesium</keyword>
<keyword id="KW-0472">Membrane</keyword>
<keyword id="KW-0479">Metal-binding</keyword>
<keyword id="KW-1185">Reference proteome</keyword>
<keyword id="KW-0677">Repeat</keyword>
<keyword id="KW-0812">Transmembrane</keyword>
<keyword id="KW-1133">Transmembrane helix</keyword>
<keyword id="KW-0813">Transport</keyword>
<protein>
    <recommendedName>
        <fullName evidence="6">Magnesium transporter MgtE</fullName>
    </recommendedName>
</protein>
<feature type="chain" id="PRO_0000363888" description="Magnesium transporter MgtE">
    <location>
        <begin position="1"/>
        <end position="453"/>
    </location>
</feature>
<feature type="topological domain" description="Cytoplasmic" evidence="6">
    <location>
        <begin position="1"/>
        <end position="286"/>
    </location>
</feature>
<feature type="transmembrane region" description="Helical" evidence="2">
    <location>
        <begin position="287"/>
        <end position="307"/>
    </location>
</feature>
<feature type="topological domain" description="Extracellular" evidence="6">
    <location>
        <position position="308"/>
    </location>
</feature>
<feature type="transmembrane region" description="Helical" evidence="2">
    <location>
        <begin position="309"/>
        <end position="329"/>
    </location>
</feature>
<feature type="topological domain" description="Cytoplasmic" evidence="6">
    <location>
        <begin position="330"/>
        <end position="360"/>
    </location>
</feature>
<feature type="transmembrane region" description="Helical" evidence="2">
    <location>
        <begin position="361"/>
        <end position="381"/>
    </location>
</feature>
<feature type="topological domain" description="Extracellular" evidence="6">
    <location>
        <begin position="382"/>
        <end position="389"/>
    </location>
</feature>
<feature type="transmembrane region" description="Helical" evidence="2">
    <location>
        <begin position="390"/>
        <end position="410"/>
    </location>
</feature>
<feature type="topological domain" description="Cytoplasmic" evidence="6">
    <location>
        <begin position="411"/>
        <end position="427"/>
    </location>
</feature>
<feature type="transmembrane region" description="Helical" evidence="2">
    <location>
        <begin position="428"/>
        <end position="448"/>
    </location>
</feature>
<feature type="topological domain" description="Extracellular" evidence="6">
    <location>
        <begin position="449"/>
        <end position="453"/>
    </location>
</feature>
<feature type="domain" description="CBS 1" evidence="3">
    <location>
        <begin position="142"/>
        <end position="205"/>
    </location>
</feature>
<feature type="domain" description="CBS 2" evidence="3">
    <location>
        <begin position="206"/>
        <end position="262"/>
    </location>
</feature>
<feature type="binding site" evidence="4 8">
    <location>
        <position position="71"/>
    </location>
    <ligand>
        <name>Mg(2+)</name>
        <dbReference type="ChEBI" id="CHEBI:18420"/>
        <label>1</label>
    </ligand>
</feature>
<feature type="binding site" evidence="4 8">
    <location>
        <position position="98"/>
    </location>
    <ligand>
        <name>Mg(2+)</name>
        <dbReference type="ChEBI" id="CHEBI:18420"/>
        <label>2</label>
    </ligand>
</feature>
<feature type="binding site" evidence="4 8">
    <location>
        <position position="102"/>
    </location>
    <ligand>
        <name>Mg(2+)</name>
        <dbReference type="ChEBI" id="CHEBI:18420"/>
        <label>3</label>
    </ligand>
</feature>
<feature type="binding site" evidence="4 8">
    <location>
        <position position="136"/>
    </location>
    <ligand>
        <name>Mg(2+)</name>
        <dbReference type="ChEBI" id="CHEBI:18420"/>
        <label>4</label>
    </ligand>
</feature>
<feature type="binding site" evidence="4 8">
    <location>
        <position position="140"/>
    </location>
    <ligand>
        <name>Mg(2+)</name>
        <dbReference type="ChEBI" id="CHEBI:18420"/>
        <label>3</label>
    </ligand>
</feature>
<feature type="binding site" evidence="4 8">
    <location>
        <position position="176"/>
    </location>
    <ligand>
        <name>Mg(2+)</name>
        <dbReference type="ChEBI" id="CHEBI:18420"/>
        <label>5</label>
    </ligand>
</feature>
<feature type="binding site" evidence="4 8">
    <location>
        <position position="227"/>
    </location>
    <ligand>
        <name>Mg(2+)</name>
        <dbReference type="ChEBI" id="CHEBI:18420"/>
        <label>6</label>
    </ligand>
</feature>
<feature type="binding site" evidence="4 8">
    <location>
        <position position="230"/>
    </location>
    <ligand>
        <name>Mg(2+)</name>
        <dbReference type="ChEBI" id="CHEBI:18420"/>
        <label>6</label>
    </ligand>
</feature>
<feature type="binding site" evidence="4 8">
    <location>
        <position position="233"/>
    </location>
    <ligand>
        <name>Mg(2+)</name>
        <dbReference type="ChEBI" id="CHEBI:18420"/>
        <label>5</label>
    </ligand>
</feature>
<feature type="binding site" evidence="4 8">
    <location>
        <position position="251"/>
    </location>
    <ligand>
        <name>Mg(2+)</name>
        <dbReference type="ChEBI" id="CHEBI:18420"/>
        <label>2</label>
    </ligand>
</feature>
<feature type="binding site" evidence="4 8">
    <location>
        <position position="259"/>
    </location>
    <ligand>
        <name>Mg(2+)</name>
        <dbReference type="ChEBI" id="CHEBI:18420"/>
        <label>4</label>
    </ligand>
</feature>
<feature type="binding site" evidence="1">
    <location>
        <position position="434"/>
    </location>
    <ligand>
        <name>Mg(2+)</name>
        <dbReference type="ChEBI" id="CHEBI:18420"/>
        <label>7</label>
    </ligand>
</feature>
<feature type="helix" evidence="9">
    <location>
        <begin position="7"/>
        <end position="19"/>
    </location>
</feature>
<feature type="helix" evidence="9">
    <location>
        <begin position="23"/>
        <end position="30"/>
    </location>
</feature>
<feature type="helix" evidence="9">
    <location>
        <begin position="35"/>
        <end position="42"/>
    </location>
</feature>
<feature type="helix" evidence="9">
    <location>
        <begin position="47"/>
        <end position="56"/>
    </location>
</feature>
<feature type="helix" evidence="9">
    <location>
        <begin position="59"/>
        <end position="66"/>
    </location>
</feature>
<feature type="strand" evidence="9">
    <location>
        <begin position="73"/>
        <end position="75"/>
    </location>
</feature>
<feature type="helix" evidence="9">
    <location>
        <begin position="78"/>
        <end position="82"/>
    </location>
</feature>
<feature type="helix" evidence="9">
    <location>
        <begin position="85"/>
        <end position="92"/>
    </location>
</feature>
<feature type="helix" evidence="9">
    <location>
        <begin position="97"/>
        <end position="106"/>
    </location>
</feature>
<feature type="helix" evidence="9">
    <location>
        <begin position="109"/>
        <end position="117"/>
    </location>
</feature>
<feature type="helix" evidence="9">
    <location>
        <begin position="121"/>
        <end position="130"/>
    </location>
</feature>
<feature type="helix" evidence="9">
    <location>
        <begin position="138"/>
        <end position="141"/>
    </location>
</feature>
<feature type="strand" evidence="9">
    <location>
        <begin position="151"/>
        <end position="154"/>
    </location>
</feature>
<feature type="helix" evidence="9">
    <location>
        <begin position="155"/>
        <end position="165"/>
    </location>
</feature>
<feature type="strand" evidence="9">
    <location>
        <begin position="173"/>
        <end position="178"/>
    </location>
</feature>
<feature type="strand" evidence="9">
    <location>
        <begin position="183"/>
        <end position="189"/>
    </location>
</feature>
<feature type="helix" evidence="9">
    <location>
        <begin position="190"/>
        <end position="193"/>
    </location>
</feature>
<feature type="helix" evidence="9">
    <location>
        <begin position="202"/>
        <end position="205"/>
    </location>
</feature>
<feature type="strand" evidence="9">
    <location>
        <begin position="206"/>
        <end position="208"/>
    </location>
</feature>
<feature type="helix" evidence="9">
    <location>
        <begin position="219"/>
        <end position="229"/>
    </location>
</feature>
<feature type="strand" evidence="9">
    <location>
        <begin position="232"/>
        <end position="237"/>
    </location>
</feature>
<feature type="strand" evidence="9">
    <location>
        <begin position="242"/>
        <end position="248"/>
    </location>
</feature>
<feature type="helix" evidence="9">
    <location>
        <begin position="249"/>
        <end position="261"/>
    </location>
</feature>
<organism>
    <name type="scientific">Enterococcus faecalis (strain ATCC 700802 / V583)</name>
    <dbReference type="NCBI Taxonomy" id="226185"/>
    <lineage>
        <taxon>Bacteria</taxon>
        <taxon>Bacillati</taxon>
        <taxon>Bacillota</taxon>
        <taxon>Bacilli</taxon>
        <taxon>Lactobacillales</taxon>
        <taxon>Enterococcaceae</taxon>
        <taxon>Enterococcus</taxon>
    </lineage>
</organism>
<sequence>MNEGQEMEEQFALLLETLKNQQMNEFRELFLALHIYEQGQFYQSLDEKDRQHLYNYLSPKELADMFDVIEEDNENMKDYLAEMRPSYAADMLAEMYTDNAVDLLNMLDKSQKAKYLSLLSSEEAGEIKELLHYEDETAGAIMTTEFVSIVANQTVRSAMYVLKNQADMAETIYYVYVVDQENHLVGVISLRDLIVNDDDTLIADILNERVISVHVGDDQEDVAQTIRDYDFLAVPVTDYDDHLLGIVTVDDIIDVIDDEAASDYSGLAGVDVEEVSENPLKAASKRLPWLITLLFLGMSTASLISNYESLVSEASILAVFISLITGTAGNAGTQSLAVAVRRLAMKDEKDSNFGRLILSEVLTGLVTGAVTGLTIMIVVGVWQHNLPLGFVIGMAMLCAITVANLAGSLIPMLMDKLGFDPAVASGPFITTLSDLTSVLIYFNIASMFMRYFV</sequence>
<accession>Q830V1</accession>
<comment type="function">
    <text evidence="1">Acts as a magnesium transporter.</text>
</comment>
<comment type="catalytic activity">
    <reaction evidence="1">
        <text>Mg(2+)(in) = Mg(2+)(out)</text>
        <dbReference type="Rhea" id="RHEA:29827"/>
        <dbReference type="ChEBI" id="CHEBI:18420"/>
    </reaction>
</comment>
<comment type="subunit">
    <text evidence="4 7">Homodimer.</text>
</comment>
<comment type="subcellular location">
    <subcellularLocation>
        <location evidence="6">Cell membrane</location>
        <topology evidence="2">Multi-pass membrane protein</topology>
    </subcellularLocation>
</comment>
<comment type="similarity">
    <text evidence="6">Belongs to the SLC41A transporter family.</text>
</comment>